<comment type="function">
    <text evidence="1">Interacts with outer membrane receptor proteins that carry out high-affinity binding and energy dependent uptake into the periplasmic space of specific substrates. It could act to transduce energy from the cytoplasmic membrane to specific energy-requiring processes in the outer membrane, resulting in the release into the periplasm of ligands bound by these outer membrane proteins (By similarity).</text>
</comment>
<comment type="subcellular location">
    <subcellularLocation>
        <location evidence="1">Cell inner membrane</location>
        <topology evidence="1">Single-pass membrane protein</topology>
        <orientation evidence="1">Periplasmic side</orientation>
    </subcellularLocation>
</comment>
<comment type="similarity">
    <text evidence="5">Belongs to the TonB family.</text>
</comment>
<evidence type="ECO:0000250" key="1"/>
<evidence type="ECO:0000255" key="2"/>
<evidence type="ECO:0000255" key="3">
    <source>
        <dbReference type="PROSITE-ProRule" id="PRU01359"/>
    </source>
</evidence>
<evidence type="ECO:0000256" key="4">
    <source>
        <dbReference type="SAM" id="MobiDB-lite"/>
    </source>
</evidence>
<evidence type="ECO:0000305" key="5"/>
<evidence type="ECO:0007829" key="6">
    <source>
        <dbReference type="PDB" id="5LW8"/>
    </source>
</evidence>
<evidence type="ECO:0007829" key="7">
    <source>
        <dbReference type="PDB" id="6SLY"/>
    </source>
</evidence>
<reference key="1">
    <citation type="journal article" date="1997" name="Nature">
        <title>The complete genome sequence of the gastric pathogen Helicobacter pylori.</title>
        <authorList>
            <person name="Tomb J.-F."/>
            <person name="White O."/>
            <person name="Kerlavage A.R."/>
            <person name="Clayton R.A."/>
            <person name="Sutton G.G."/>
            <person name="Fleischmann R.D."/>
            <person name="Ketchum K.A."/>
            <person name="Klenk H.-P."/>
            <person name="Gill S.R."/>
            <person name="Dougherty B.A."/>
            <person name="Nelson K.E."/>
            <person name="Quackenbush J."/>
            <person name="Zhou L."/>
            <person name="Kirkness E.F."/>
            <person name="Peterson S.N."/>
            <person name="Loftus B.J."/>
            <person name="Richardson D.L."/>
            <person name="Dodson R.J."/>
            <person name="Khalak H.G."/>
            <person name="Glodek A."/>
            <person name="McKenney K."/>
            <person name="FitzGerald L.M."/>
            <person name="Lee N."/>
            <person name="Adams M.D."/>
            <person name="Hickey E.K."/>
            <person name="Berg D.E."/>
            <person name="Gocayne J.D."/>
            <person name="Utterback T.R."/>
            <person name="Peterson J.D."/>
            <person name="Kelley J.M."/>
            <person name="Cotton M.D."/>
            <person name="Weidman J.F."/>
            <person name="Fujii C."/>
            <person name="Bowman C."/>
            <person name="Watthey L."/>
            <person name="Wallin E."/>
            <person name="Hayes W.S."/>
            <person name="Borodovsky M."/>
            <person name="Karp P.D."/>
            <person name="Smith H.O."/>
            <person name="Fraser C.M."/>
            <person name="Venter J.C."/>
        </authorList>
    </citation>
    <scope>NUCLEOTIDE SEQUENCE [LARGE SCALE GENOMIC DNA]</scope>
    <source>
        <strain>ATCC 700392 / 26695</strain>
    </source>
</reference>
<name>TONB_HELPY</name>
<dbReference type="EMBL" id="AE000511">
    <property type="protein sequence ID" value="AAD08383.1"/>
    <property type="molecule type" value="Genomic_DNA"/>
</dbReference>
<dbReference type="PIR" id="E64687">
    <property type="entry name" value="E64687"/>
</dbReference>
<dbReference type="RefSeq" id="NP_208133.1">
    <property type="nucleotide sequence ID" value="NC_000915.1"/>
</dbReference>
<dbReference type="RefSeq" id="WP_000703807.1">
    <property type="nucleotide sequence ID" value="NC_018939.1"/>
</dbReference>
<dbReference type="PDB" id="5LW8">
    <property type="method" value="NMR"/>
    <property type="chains" value="A=194-285"/>
</dbReference>
<dbReference type="PDB" id="6SLY">
    <property type="method" value="NMR"/>
    <property type="chains" value="A=179-285"/>
</dbReference>
<dbReference type="PDBsum" id="5LW8"/>
<dbReference type="PDBsum" id="6SLY"/>
<dbReference type="BMRB" id="O25899"/>
<dbReference type="SMR" id="O25899"/>
<dbReference type="IntAct" id="O25899">
    <property type="interactions" value="1"/>
</dbReference>
<dbReference type="MINT" id="O25899"/>
<dbReference type="STRING" id="85962.HP_1341"/>
<dbReference type="PaxDb" id="85962-C694_06920"/>
<dbReference type="EnsemblBacteria" id="AAD08383">
    <property type="protein sequence ID" value="AAD08383"/>
    <property type="gene ID" value="HP_1341"/>
</dbReference>
<dbReference type="KEGG" id="heo:C694_06920"/>
<dbReference type="KEGG" id="hpy:HP_1341"/>
<dbReference type="PATRIC" id="fig|85962.47.peg.1436"/>
<dbReference type="eggNOG" id="COG0810">
    <property type="taxonomic scope" value="Bacteria"/>
</dbReference>
<dbReference type="InParanoid" id="O25899"/>
<dbReference type="OrthoDB" id="5334999at2"/>
<dbReference type="Proteomes" id="UP000000429">
    <property type="component" value="Chromosome"/>
</dbReference>
<dbReference type="GO" id="GO:0030288">
    <property type="term" value="C:outer membrane-bounded periplasmic space"/>
    <property type="evidence" value="ECO:0007669"/>
    <property type="project" value="InterPro"/>
</dbReference>
<dbReference type="GO" id="GO:0098797">
    <property type="term" value="C:plasma membrane protein complex"/>
    <property type="evidence" value="ECO:0000318"/>
    <property type="project" value="GO_Central"/>
</dbReference>
<dbReference type="GO" id="GO:0031992">
    <property type="term" value="F:energy transducer activity"/>
    <property type="evidence" value="ECO:0000318"/>
    <property type="project" value="GO_Central"/>
</dbReference>
<dbReference type="GO" id="GO:0015031">
    <property type="term" value="P:protein transport"/>
    <property type="evidence" value="ECO:0007669"/>
    <property type="project" value="UniProtKB-KW"/>
</dbReference>
<dbReference type="GO" id="GO:0015891">
    <property type="term" value="P:siderophore transport"/>
    <property type="evidence" value="ECO:0007669"/>
    <property type="project" value="InterPro"/>
</dbReference>
<dbReference type="GO" id="GO:0055085">
    <property type="term" value="P:transmembrane transport"/>
    <property type="evidence" value="ECO:0007669"/>
    <property type="project" value="InterPro"/>
</dbReference>
<dbReference type="FunFam" id="3.30.1150.10:FF:000015">
    <property type="entry name" value="Protein TonB"/>
    <property type="match status" value="1"/>
</dbReference>
<dbReference type="Gene3D" id="3.30.1150.10">
    <property type="match status" value="1"/>
</dbReference>
<dbReference type="InterPro" id="IPR003538">
    <property type="entry name" value="TonB"/>
</dbReference>
<dbReference type="InterPro" id="IPR051045">
    <property type="entry name" value="TonB-dependent_transducer"/>
</dbReference>
<dbReference type="InterPro" id="IPR006260">
    <property type="entry name" value="TonB/TolA_C"/>
</dbReference>
<dbReference type="InterPro" id="IPR037682">
    <property type="entry name" value="TonB_C"/>
</dbReference>
<dbReference type="NCBIfam" id="TIGR01352">
    <property type="entry name" value="tonB_Cterm"/>
    <property type="match status" value="1"/>
</dbReference>
<dbReference type="PANTHER" id="PTHR33446:SF2">
    <property type="entry name" value="PROTEIN TONB"/>
    <property type="match status" value="1"/>
</dbReference>
<dbReference type="PANTHER" id="PTHR33446">
    <property type="entry name" value="PROTEIN TONB-RELATED"/>
    <property type="match status" value="1"/>
</dbReference>
<dbReference type="Pfam" id="PF03544">
    <property type="entry name" value="TonB_C"/>
    <property type="match status" value="1"/>
</dbReference>
<dbReference type="PRINTS" id="PR01374">
    <property type="entry name" value="TONBPROTEIN"/>
</dbReference>
<dbReference type="SUPFAM" id="SSF74653">
    <property type="entry name" value="TolA/TonB C-terminal domain"/>
    <property type="match status" value="1"/>
</dbReference>
<dbReference type="PROSITE" id="PS52015">
    <property type="entry name" value="TONB_CTD"/>
    <property type="match status" value="1"/>
</dbReference>
<accession>O25899</accession>
<gene>
    <name type="primary">tonB</name>
    <name type="ordered locus">HP_1341</name>
</gene>
<feature type="chain" id="PRO_0000196198" description="Protein TonB">
    <location>
        <begin position="1"/>
        <end position="285"/>
    </location>
</feature>
<feature type="topological domain" description="Cytoplasmic" evidence="2">
    <location>
        <begin position="1"/>
        <end position="14"/>
    </location>
</feature>
<feature type="transmembrane region" description="Helical; Signal-anchor" evidence="2">
    <location>
        <begin position="15"/>
        <end position="35"/>
    </location>
</feature>
<feature type="topological domain" description="Periplasmic" evidence="2">
    <location>
        <begin position="36"/>
        <end position="285"/>
    </location>
</feature>
<feature type="domain" description="TonB C-terminal" evidence="3">
    <location>
        <begin position="196"/>
        <end position="285"/>
    </location>
</feature>
<feature type="region of interest" description="Disordered" evidence="4">
    <location>
        <begin position="55"/>
        <end position="187"/>
    </location>
</feature>
<feature type="compositionally biased region" description="Polar residues" evidence="4">
    <location>
        <begin position="55"/>
        <end position="69"/>
    </location>
</feature>
<feature type="compositionally biased region" description="Basic and acidic residues" evidence="4">
    <location>
        <begin position="71"/>
        <end position="97"/>
    </location>
</feature>
<feature type="compositionally biased region" description="Basic residues" evidence="4">
    <location>
        <begin position="98"/>
        <end position="111"/>
    </location>
</feature>
<feature type="compositionally biased region" description="Basic and acidic residues" evidence="4">
    <location>
        <begin position="112"/>
        <end position="156"/>
    </location>
</feature>
<feature type="compositionally biased region" description="Basic and acidic residues" evidence="4">
    <location>
        <begin position="164"/>
        <end position="177"/>
    </location>
</feature>
<feature type="compositionally biased region" description="Polar residues" evidence="4">
    <location>
        <begin position="178"/>
        <end position="187"/>
    </location>
</feature>
<feature type="helix" evidence="7">
    <location>
        <begin position="185"/>
        <end position="189"/>
    </location>
</feature>
<feature type="helix" evidence="6">
    <location>
        <begin position="197"/>
        <end position="208"/>
    </location>
</feature>
<feature type="helix" evidence="6">
    <location>
        <begin position="215"/>
        <end position="218"/>
    </location>
</feature>
<feature type="strand" evidence="6">
    <location>
        <begin position="222"/>
        <end position="230"/>
    </location>
</feature>
<feature type="turn" evidence="7">
    <location>
        <begin position="232"/>
        <end position="234"/>
    </location>
</feature>
<feature type="strand" evidence="6">
    <location>
        <begin position="236"/>
        <end position="246"/>
    </location>
</feature>
<feature type="helix" evidence="6">
    <location>
        <begin position="248"/>
        <end position="260"/>
    </location>
</feature>
<feature type="helix" evidence="6">
    <location>
        <begin position="262"/>
        <end position="264"/>
    </location>
</feature>
<feature type="strand" evidence="6">
    <location>
        <begin position="274"/>
        <end position="280"/>
    </location>
</feature>
<protein>
    <recommendedName>
        <fullName>Protein TonB</fullName>
    </recommendedName>
</protein>
<keyword id="KW-0002">3D-structure</keyword>
<keyword id="KW-0997">Cell inner membrane</keyword>
<keyword id="KW-1003">Cell membrane</keyword>
<keyword id="KW-0472">Membrane</keyword>
<keyword id="KW-0653">Protein transport</keyword>
<keyword id="KW-1185">Reference proteome</keyword>
<keyword id="KW-0677">Repeat</keyword>
<keyword id="KW-0735">Signal-anchor</keyword>
<keyword id="KW-0812">Transmembrane</keyword>
<keyword id="KW-1133">Transmembrane helix</keyword>
<keyword id="KW-0813">Transport</keyword>
<proteinExistence type="evidence at protein level"/>
<sequence>MKISPSPRKLSKVSTSVSFLISFALYAIGFGYFLLREDAPEPLAQAGTTKVTMSLASINTNSNTKTNAESAKPKEEPKEKPKKEEPKKEEPKKEVTKPKPKPKPKPKPKPKPKPEPKPEPKPEPKPEPKVEEVKKEEPKEEPKKEEAKEEAKEKSAPKQVTTKDIVKEKDKQEESNKTSEGATSEAQAYNPGVSNEFLMKIQTAISSKNRYPKMAQIRGIEGEVLVSFTINADGSVTDIKVVKSNTTDILNHAALEAIKSAAHLFPKPEETVHLKIPIAYSLKED</sequence>
<organism>
    <name type="scientific">Helicobacter pylori (strain ATCC 700392 / 26695)</name>
    <name type="common">Campylobacter pylori</name>
    <dbReference type="NCBI Taxonomy" id="85962"/>
    <lineage>
        <taxon>Bacteria</taxon>
        <taxon>Pseudomonadati</taxon>
        <taxon>Campylobacterota</taxon>
        <taxon>Epsilonproteobacteria</taxon>
        <taxon>Campylobacterales</taxon>
        <taxon>Helicobacteraceae</taxon>
        <taxon>Helicobacter</taxon>
    </lineage>
</organism>